<organism>
    <name type="scientific">Streptococcus agalactiae serotype Ia (strain ATCC 27591 / A909 / CDC SS700)</name>
    <dbReference type="NCBI Taxonomy" id="205921"/>
    <lineage>
        <taxon>Bacteria</taxon>
        <taxon>Bacillati</taxon>
        <taxon>Bacillota</taxon>
        <taxon>Bacilli</taxon>
        <taxon>Lactobacillales</taxon>
        <taxon>Streptococcaceae</taxon>
        <taxon>Streptococcus</taxon>
    </lineage>
</organism>
<keyword id="KW-0963">Cytoplasm</keyword>
<keyword id="KW-0489">Methyltransferase</keyword>
<keyword id="KW-0949">S-adenosyl-L-methionine</keyword>
<keyword id="KW-0808">Transferase</keyword>
<comment type="function">
    <text evidence="1">Methylates ribosomal protein L11.</text>
</comment>
<comment type="catalytic activity">
    <reaction evidence="1">
        <text>L-lysyl-[protein] + 3 S-adenosyl-L-methionine = N(6),N(6),N(6)-trimethyl-L-lysyl-[protein] + 3 S-adenosyl-L-homocysteine + 3 H(+)</text>
        <dbReference type="Rhea" id="RHEA:54192"/>
        <dbReference type="Rhea" id="RHEA-COMP:9752"/>
        <dbReference type="Rhea" id="RHEA-COMP:13826"/>
        <dbReference type="ChEBI" id="CHEBI:15378"/>
        <dbReference type="ChEBI" id="CHEBI:29969"/>
        <dbReference type="ChEBI" id="CHEBI:57856"/>
        <dbReference type="ChEBI" id="CHEBI:59789"/>
        <dbReference type="ChEBI" id="CHEBI:61961"/>
    </reaction>
</comment>
<comment type="subcellular location">
    <subcellularLocation>
        <location evidence="1">Cytoplasm</location>
    </subcellularLocation>
</comment>
<comment type="similarity">
    <text evidence="1">Belongs to the methyltransferase superfamily. PrmA family.</text>
</comment>
<dbReference type="EC" id="2.1.1.-" evidence="1"/>
<dbReference type="EMBL" id="CP000114">
    <property type="protein sequence ID" value="ABA44482.1"/>
    <property type="molecule type" value="Genomic_DNA"/>
</dbReference>
<dbReference type="RefSeq" id="WP_001099295.1">
    <property type="nucleotide sequence ID" value="NC_007432.1"/>
</dbReference>
<dbReference type="SMR" id="Q3JYX9"/>
<dbReference type="KEGG" id="sak:SAK_1930"/>
<dbReference type="HOGENOM" id="CLU_049382_0_1_9"/>
<dbReference type="GO" id="GO:0005737">
    <property type="term" value="C:cytoplasm"/>
    <property type="evidence" value="ECO:0007669"/>
    <property type="project" value="UniProtKB-SubCell"/>
</dbReference>
<dbReference type="GO" id="GO:0016279">
    <property type="term" value="F:protein-lysine N-methyltransferase activity"/>
    <property type="evidence" value="ECO:0007669"/>
    <property type="project" value="RHEA"/>
</dbReference>
<dbReference type="GO" id="GO:0032259">
    <property type="term" value="P:methylation"/>
    <property type="evidence" value="ECO:0007669"/>
    <property type="project" value="UniProtKB-KW"/>
</dbReference>
<dbReference type="CDD" id="cd02440">
    <property type="entry name" value="AdoMet_MTases"/>
    <property type="match status" value="1"/>
</dbReference>
<dbReference type="Gene3D" id="3.40.50.150">
    <property type="entry name" value="Vaccinia Virus protein VP39"/>
    <property type="match status" value="1"/>
</dbReference>
<dbReference type="HAMAP" id="MF_00735">
    <property type="entry name" value="Methyltr_PrmA"/>
    <property type="match status" value="1"/>
</dbReference>
<dbReference type="InterPro" id="IPR050078">
    <property type="entry name" value="Ribosomal_L11_MeTrfase_PrmA"/>
</dbReference>
<dbReference type="InterPro" id="IPR004498">
    <property type="entry name" value="Ribosomal_PrmA_MeTrfase"/>
</dbReference>
<dbReference type="InterPro" id="IPR029063">
    <property type="entry name" value="SAM-dependent_MTases_sf"/>
</dbReference>
<dbReference type="NCBIfam" id="TIGR00406">
    <property type="entry name" value="prmA"/>
    <property type="match status" value="1"/>
</dbReference>
<dbReference type="PANTHER" id="PTHR43648">
    <property type="entry name" value="ELECTRON TRANSFER FLAVOPROTEIN BETA SUBUNIT LYSINE METHYLTRANSFERASE"/>
    <property type="match status" value="1"/>
</dbReference>
<dbReference type="PANTHER" id="PTHR43648:SF1">
    <property type="entry name" value="ELECTRON TRANSFER FLAVOPROTEIN BETA SUBUNIT LYSINE METHYLTRANSFERASE"/>
    <property type="match status" value="1"/>
</dbReference>
<dbReference type="Pfam" id="PF06325">
    <property type="entry name" value="PrmA"/>
    <property type="match status" value="1"/>
</dbReference>
<dbReference type="PIRSF" id="PIRSF000401">
    <property type="entry name" value="RPL11_MTase"/>
    <property type="match status" value="1"/>
</dbReference>
<dbReference type="SUPFAM" id="SSF53335">
    <property type="entry name" value="S-adenosyl-L-methionine-dependent methyltransferases"/>
    <property type="match status" value="1"/>
</dbReference>
<sequence length="317" mass="34659">MNTWNELTVHVNREAEEAVSNLLIETGSQGVAISDSADYLGQEDRFGELYPEVEQSDMIAITAYYPDTLDIEVVKADLADRLANFEGFGLATGSVNLDSQELVEEDWADNWKKYYEPARITHDLTIVPSWTDYEAKAGEKIIKLDPGMAFGTGTHPTTKMSLFALEQVLRGGETVIDVGTGSGVLSIASSLLGAKDIYAFDLDVVAVRVAQENIDMNPGTDNIHVAAGDLLKGVQQEADVIVANILADILIHLTDDAYRLVKDEGYLIMSGIISEKWDMVRESAEKAGFFLETHMVQGEWNACVFKKTDDISGVIGG</sequence>
<feature type="chain" id="PRO_1000046103" description="Ribosomal protein L11 methyltransferase">
    <location>
        <begin position="1"/>
        <end position="317"/>
    </location>
</feature>
<feature type="binding site" evidence="1">
    <location>
        <position position="158"/>
    </location>
    <ligand>
        <name>S-adenosyl-L-methionine</name>
        <dbReference type="ChEBI" id="CHEBI:59789"/>
    </ligand>
</feature>
<feature type="binding site" evidence="1">
    <location>
        <position position="179"/>
    </location>
    <ligand>
        <name>S-adenosyl-L-methionine</name>
        <dbReference type="ChEBI" id="CHEBI:59789"/>
    </ligand>
</feature>
<feature type="binding site" evidence="1">
    <location>
        <position position="201"/>
    </location>
    <ligand>
        <name>S-adenosyl-L-methionine</name>
        <dbReference type="ChEBI" id="CHEBI:59789"/>
    </ligand>
</feature>
<feature type="binding site" evidence="1">
    <location>
        <position position="244"/>
    </location>
    <ligand>
        <name>S-adenosyl-L-methionine</name>
        <dbReference type="ChEBI" id="CHEBI:59789"/>
    </ligand>
</feature>
<accession>Q3JYX9</accession>
<gene>
    <name evidence="1" type="primary">prmA</name>
    <name type="ordered locus">SAK_1930</name>
</gene>
<evidence type="ECO:0000255" key="1">
    <source>
        <dbReference type="HAMAP-Rule" id="MF_00735"/>
    </source>
</evidence>
<reference key="1">
    <citation type="journal article" date="2005" name="Proc. Natl. Acad. Sci. U.S.A.">
        <title>Genome analysis of multiple pathogenic isolates of Streptococcus agalactiae: implications for the microbial 'pan-genome'.</title>
        <authorList>
            <person name="Tettelin H."/>
            <person name="Masignani V."/>
            <person name="Cieslewicz M.J."/>
            <person name="Donati C."/>
            <person name="Medini D."/>
            <person name="Ward N.L."/>
            <person name="Angiuoli S.V."/>
            <person name="Crabtree J."/>
            <person name="Jones A.L."/>
            <person name="Durkin A.S."/>
            <person name="DeBoy R.T."/>
            <person name="Davidsen T.M."/>
            <person name="Mora M."/>
            <person name="Scarselli M."/>
            <person name="Margarit y Ros I."/>
            <person name="Peterson J.D."/>
            <person name="Hauser C.R."/>
            <person name="Sundaram J.P."/>
            <person name="Nelson W.C."/>
            <person name="Madupu R."/>
            <person name="Brinkac L.M."/>
            <person name="Dodson R.J."/>
            <person name="Rosovitz M.J."/>
            <person name="Sullivan S.A."/>
            <person name="Daugherty S.C."/>
            <person name="Haft D.H."/>
            <person name="Selengut J."/>
            <person name="Gwinn M.L."/>
            <person name="Zhou L."/>
            <person name="Zafar N."/>
            <person name="Khouri H."/>
            <person name="Radune D."/>
            <person name="Dimitrov G."/>
            <person name="Watkins K."/>
            <person name="O'Connor K.J."/>
            <person name="Smith S."/>
            <person name="Utterback T.R."/>
            <person name="White O."/>
            <person name="Rubens C.E."/>
            <person name="Grandi G."/>
            <person name="Madoff L.C."/>
            <person name="Kasper D.L."/>
            <person name="Telford J.L."/>
            <person name="Wessels M.R."/>
            <person name="Rappuoli R."/>
            <person name="Fraser C.M."/>
        </authorList>
    </citation>
    <scope>NUCLEOTIDE SEQUENCE [LARGE SCALE GENOMIC DNA]</scope>
    <source>
        <strain>ATCC 27591 / A909 / CDC SS700</strain>
    </source>
</reference>
<name>PRMA_STRA1</name>
<proteinExistence type="inferred from homology"/>
<protein>
    <recommendedName>
        <fullName evidence="1">Ribosomal protein L11 methyltransferase</fullName>
        <shortName evidence="1">L11 Mtase</shortName>
        <ecNumber evidence="1">2.1.1.-</ecNumber>
    </recommendedName>
</protein>